<evidence type="ECO:0000256" key="1">
    <source>
        <dbReference type="SAM" id="MobiDB-lite"/>
    </source>
</evidence>
<evidence type="ECO:0000269" key="2">
    <source>
    </source>
</evidence>
<evidence type="ECO:0000303" key="3">
    <source>
    </source>
</evidence>
<evidence type="ECO:0000305" key="4"/>
<evidence type="ECO:0007744" key="5">
    <source>
    </source>
</evidence>
<evidence type="ECO:0007744" key="6">
    <source>
    </source>
</evidence>
<evidence type="ECO:0007744" key="7">
    <source>
    </source>
</evidence>
<evidence type="ECO:0007829" key="8">
    <source>
        <dbReference type="PDB" id="7EMF"/>
    </source>
</evidence>
<keyword id="KW-0002">3D-structure</keyword>
<keyword id="KW-0010">Activator</keyword>
<keyword id="KW-0025">Alternative splicing</keyword>
<keyword id="KW-0539">Nucleus</keyword>
<keyword id="KW-0597">Phosphoprotein</keyword>
<keyword id="KW-1267">Proteomics identification</keyword>
<keyword id="KW-1185">Reference proteome</keyword>
<keyword id="KW-0804">Transcription</keyword>
<keyword id="KW-0805">Transcription regulation</keyword>
<comment type="function">
    <text>Component of the Mediator complex, a coactivator involved in the regulated transcription of nearly all RNA polymerase II-dependent genes. Mediator functions as a bridge to convey information from gene-specific regulatory proteins to the basal RNA polymerase II transcription machinery. Mediator is recruited to promoters by direct interactions with regulatory proteins and serves as a scaffold for the assembly of a functional preinitiation complex with RNA polymerase II and the general transcription factors.</text>
</comment>
<comment type="subunit">
    <text evidence="2">Component of the Mediator complex, which is composed of MED1, MED4, MED6, MED7, MED8, MED9, MED10, MED11, MED12, MED13, MED13L, MED14, MED15, MED16, MED17, MED18, MED19, MED20, MED21, MED22, MED23, MED24, MED25, MED26, MED27, MED29, MED30, MED31, CCNC, CDK8 and CDC2L6/CDK11. The MED12, MED13, CCNC and CDK8 subunits form a distinct module termed the CDK8 module. Mediator containing the CDK8 module is less active than Mediator lacking this module in supporting transcriptional activation. Individual preparations of the Mediator complex lacking one or more distinct subunits have been variously termed ARC, CRSP, DRIP, PC2, SMCC and TRAP.</text>
</comment>
<comment type="interaction">
    <interactant intactId="EBI-394430">
        <id>A0JLT2</id>
    </interactant>
    <interactant intactId="EBI-394656">
        <id>Q9NX70</id>
        <label>MED29</label>
    </interactant>
    <organismsDiffer>false</organismsDiffer>
    <experiments>12</experiments>
</comment>
<comment type="interaction">
    <interactant intactId="EBI-13288755">
        <id>A0JLT2-2</id>
    </interactant>
    <interactant intactId="EBI-740376">
        <id>Q86UW9</id>
        <label>DTX2</label>
    </interactant>
    <organismsDiffer>false</organismsDiffer>
    <experiments>3</experiments>
</comment>
<comment type="interaction">
    <interactant intactId="EBI-13288755">
        <id>A0JLT2-2</id>
    </interactant>
    <interactant intactId="EBI-401755">
        <id>P62993</id>
        <label>GRB2</label>
    </interactant>
    <organismsDiffer>false</organismsDiffer>
    <experiments>3</experiments>
</comment>
<comment type="interaction">
    <interactant intactId="EBI-13288755">
        <id>A0JLT2-2</id>
    </interactant>
    <interactant intactId="EBI-3915568">
        <id>P50747</id>
        <label>HLCS</label>
    </interactant>
    <organismsDiffer>false</organismsDiffer>
    <experiments>3</experiments>
</comment>
<comment type="interaction">
    <interactant intactId="EBI-13288755">
        <id>A0JLT2-2</id>
    </interactant>
    <interactant intactId="EBI-2556193">
        <id>Q63ZY3</id>
        <label>KANK2</label>
    </interactant>
    <organismsDiffer>false</organismsDiffer>
    <experiments>3</experiments>
</comment>
<comment type="interaction">
    <interactant intactId="EBI-13288755">
        <id>A0JLT2-2</id>
    </interactant>
    <interactant intactId="EBI-399080">
        <id>Q92993</id>
        <label>KAT5</label>
    </interactant>
    <organismsDiffer>false</organismsDiffer>
    <experiments>3</experiments>
</comment>
<comment type="interaction">
    <interactant intactId="EBI-13288755">
        <id>A0JLT2-2</id>
    </interactant>
    <interactant intactId="EBI-11742507">
        <id>Q8TAP4-4</id>
        <label>LMO3</label>
    </interactant>
    <organismsDiffer>false</organismsDiffer>
    <experiments>3</experiments>
</comment>
<comment type="interaction">
    <interactant intactId="EBI-13288755">
        <id>A0JLT2-2</id>
    </interactant>
    <interactant intactId="EBI-11746523">
        <id>Q14511-2</id>
        <label>NEDD9</label>
    </interactant>
    <organismsDiffer>false</organismsDiffer>
    <experiments>3</experiments>
</comment>
<comment type="interaction">
    <interactant intactId="EBI-13288755">
        <id>A0JLT2-2</id>
    </interactant>
    <interactant intactId="EBI-1383528">
        <id>P17252</id>
        <label>PRKCA</label>
    </interactant>
    <organismsDiffer>false</organismsDiffer>
    <experiments>3</experiments>
</comment>
<comment type="interaction">
    <interactant intactId="EBI-13288755">
        <id>A0JLT2-2</id>
    </interactant>
    <interactant intactId="EBI-10226430">
        <id>Q0D2K3</id>
        <label>RIPPLY1</label>
    </interactant>
    <organismsDiffer>false</organismsDiffer>
    <experiments>3</experiments>
</comment>
<comment type="interaction">
    <interactant intactId="EBI-13288755">
        <id>A0JLT2-2</id>
    </interactant>
    <interactant intactId="EBI-9090795">
        <id>Q15047-2</id>
        <label>SETDB1</label>
    </interactant>
    <organismsDiffer>false</organismsDiffer>
    <experiments>3</experiments>
</comment>
<comment type="interaction">
    <interactant intactId="EBI-13288755">
        <id>A0JLT2-2</id>
    </interactant>
    <interactant intactId="EBI-372899">
        <id>Q13148</id>
        <label>TARDBP</label>
    </interactant>
    <organismsDiffer>false</organismsDiffer>
    <experiments>3</experiments>
</comment>
<comment type="interaction">
    <interactant intactId="EBI-13288755">
        <id>A0JLT2-2</id>
    </interactant>
    <interactant intactId="EBI-359832">
        <id>P61981</id>
        <label>YWHAG</label>
    </interactant>
    <organismsDiffer>false</organismsDiffer>
    <experiments>3</experiments>
</comment>
<comment type="interaction">
    <interactant intactId="EBI-13288755">
        <id>A0JLT2-2</id>
    </interactant>
    <interactant intactId="EBI-7254550">
        <id>P36508</id>
        <label>ZNF76</label>
    </interactant>
    <organismsDiffer>false</organismsDiffer>
    <experiments>3</experiments>
</comment>
<comment type="subcellular location">
    <subcellularLocation>
        <location evidence="4">Nucleus</location>
    </subcellularLocation>
</comment>
<comment type="alternative products">
    <event type="alternative splicing"/>
    <isoform>
        <id>A0JLT2-1</id>
        <name>1</name>
        <sequence type="displayed"/>
    </isoform>
    <isoform>
        <id>A0JLT2-2</id>
        <name>2</name>
        <sequence type="described" ref="VSP_028121 VSP_028122"/>
    </isoform>
</comment>
<comment type="similarity">
    <text evidence="4">Belongs to the Mediator complex subunit 19 family.</text>
</comment>
<comment type="sequence caution" evidence="4">
    <conflict type="erroneous initiation">
        <sequence resource="EMBL-CDS" id="AAN16075"/>
    </conflict>
</comment>
<protein>
    <recommendedName>
        <fullName>Mediator of RNA polymerase II transcription subunit 19</fullName>
    </recommendedName>
    <alternativeName>
        <fullName>Lung cancer metastasis-related protein 1</fullName>
    </alternativeName>
    <alternativeName>
        <fullName>Mediator complex subunit 19</fullName>
    </alternativeName>
</protein>
<gene>
    <name type="primary">MED19</name>
    <name type="synonym">LCMR1</name>
</gene>
<feature type="chain" id="PRO_0000304766" description="Mediator of RNA polymerase II transcription subunit 19">
    <location>
        <begin position="1"/>
        <end position="244"/>
    </location>
</feature>
<feature type="region of interest" description="Disordered" evidence="1">
    <location>
        <begin position="1"/>
        <end position="56"/>
    </location>
</feature>
<feature type="region of interest" description="Disordered" evidence="1">
    <location>
        <begin position="171"/>
        <end position="244"/>
    </location>
</feature>
<feature type="compositionally biased region" description="Pro residues" evidence="1">
    <location>
        <begin position="26"/>
        <end position="47"/>
    </location>
</feature>
<feature type="compositionally biased region" description="Basic residues" evidence="1">
    <location>
        <begin position="171"/>
        <end position="182"/>
    </location>
</feature>
<feature type="compositionally biased region" description="Basic residues" evidence="1">
    <location>
        <begin position="212"/>
        <end position="224"/>
    </location>
</feature>
<feature type="compositionally biased region" description="Low complexity" evidence="1">
    <location>
        <begin position="234"/>
        <end position="244"/>
    </location>
</feature>
<feature type="modified residue" description="Phosphoserine" evidence="7">
    <location>
        <position position="194"/>
    </location>
</feature>
<feature type="modified residue" description="Phosphoserine" evidence="5 6 7">
    <location>
        <position position="226"/>
    </location>
</feature>
<feature type="splice variant" id="VSP_028121" description="In isoform 2." evidence="3">
    <original>ETPS</original>
    <variation>GKPS</variation>
    <location>
        <begin position="191"/>
        <end position="194"/>
    </location>
</feature>
<feature type="splice variant" id="VSP_028122" description="In isoform 2." evidence="3">
    <location>
        <begin position="195"/>
        <end position="244"/>
    </location>
</feature>
<feature type="sequence conflict" description="In Ref. 3; AAN16075." evidence="4" ref="3">
    <original>H</original>
    <variation>P</variation>
    <location>
        <position position="198"/>
    </location>
</feature>
<feature type="strand" evidence="8">
    <location>
        <begin position="79"/>
        <end position="81"/>
    </location>
</feature>
<feature type="helix" evidence="8">
    <location>
        <begin position="83"/>
        <end position="86"/>
    </location>
</feature>
<feature type="helix" evidence="8">
    <location>
        <begin position="90"/>
        <end position="96"/>
    </location>
</feature>
<feature type="helix" evidence="8">
    <location>
        <begin position="112"/>
        <end position="116"/>
    </location>
</feature>
<feature type="turn" evidence="8">
    <location>
        <begin position="117"/>
        <end position="119"/>
    </location>
</feature>
<feature type="helix" evidence="8">
    <location>
        <begin position="128"/>
        <end position="138"/>
    </location>
</feature>
<feature type="helix" evidence="8">
    <location>
        <begin position="147"/>
        <end position="152"/>
    </location>
</feature>
<sequence length="244" mass="26273">MENFTALFGAQADPPPPPTALGFGPGKPPPPPPPPAGGGPGTAPPPTAATAPPGADKSGAGCGPFYLMRELPGSTELTGSTNLITHYNLEQAYNKFCGKKVKEKLSNFLPDLPGMIDLPGSHDNSSLRSLIEKPPILSSSFNPITGTMLAGFRLHTGPLPEQCRLMHIQPPKKKNKHKHKQSRTQDPVPPETPSDSDHKKKKKKKEEDPDRKRKKKEKKKKKNRHSPDHPGMGSSQASSSSSLR</sequence>
<proteinExistence type="evidence at protein level"/>
<accession>A0JLT2</accession>
<accession>Q8IV02</accession>
<accession>Q8IZD1</accession>
<dbReference type="EMBL" id="CH471076">
    <property type="protein sequence ID" value="EAW73775.1"/>
    <property type="molecule type" value="Genomic_DNA"/>
</dbReference>
<dbReference type="EMBL" id="BC009723">
    <property type="protein sequence ID" value="AAH09723.1"/>
    <property type="molecule type" value="mRNA"/>
</dbReference>
<dbReference type="EMBL" id="BC037223">
    <property type="protein sequence ID" value="AAH37223.1"/>
    <property type="molecule type" value="mRNA"/>
</dbReference>
<dbReference type="EMBL" id="AY148462">
    <property type="protein sequence ID" value="AAN16075.1"/>
    <property type="status" value="ALT_INIT"/>
    <property type="molecule type" value="mRNA"/>
</dbReference>
<dbReference type="CCDS" id="CCDS7966.3">
    <molecule id="A0JLT2-2"/>
</dbReference>
<dbReference type="CCDS" id="CCDS86203.2">
    <molecule id="A0JLT2-1"/>
</dbReference>
<dbReference type="RefSeq" id="NP_001304007.1">
    <property type="nucleotide sequence ID" value="NM_001317078.1"/>
</dbReference>
<dbReference type="RefSeq" id="NP_703151.3">
    <molecule id="A0JLT2-2"/>
    <property type="nucleotide sequence ID" value="NM_153450.4"/>
</dbReference>
<dbReference type="PDB" id="7EMF">
    <property type="method" value="EM"/>
    <property type="resolution" value="3.50 A"/>
    <property type="chains" value="S=1-244"/>
</dbReference>
<dbReference type="PDB" id="7ENA">
    <property type="method" value="EM"/>
    <property type="resolution" value="4.07 A"/>
    <property type="chains" value="s=1-244"/>
</dbReference>
<dbReference type="PDB" id="7ENC">
    <property type="method" value="EM"/>
    <property type="resolution" value="4.13 A"/>
    <property type="chains" value="s=1-244"/>
</dbReference>
<dbReference type="PDB" id="7ENJ">
    <property type="method" value="EM"/>
    <property type="resolution" value="4.40 A"/>
    <property type="chains" value="S=1-244"/>
</dbReference>
<dbReference type="PDB" id="7LBM">
    <property type="method" value="EM"/>
    <property type="resolution" value="4.80 A"/>
    <property type="chains" value="w=1-244"/>
</dbReference>
<dbReference type="PDB" id="7NVR">
    <property type="method" value="EM"/>
    <property type="resolution" value="4.50 A"/>
    <property type="chains" value="m=1-244"/>
</dbReference>
<dbReference type="PDB" id="8GXQ">
    <property type="method" value="EM"/>
    <property type="resolution" value="5.04 A"/>
    <property type="chains" value="s=1-244"/>
</dbReference>
<dbReference type="PDB" id="8GXS">
    <property type="method" value="EM"/>
    <property type="resolution" value="4.16 A"/>
    <property type="chains" value="s=1-244"/>
</dbReference>
<dbReference type="PDB" id="8TQW">
    <property type="method" value="EM"/>
    <property type="resolution" value="8.20 A"/>
    <property type="chains" value="S=1-244"/>
</dbReference>
<dbReference type="PDB" id="8TRH">
    <property type="method" value="EM"/>
    <property type="resolution" value="3.70 A"/>
    <property type="chains" value="S=1-244"/>
</dbReference>
<dbReference type="PDBsum" id="7EMF"/>
<dbReference type="PDBsum" id="7ENA"/>
<dbReference type="PDBsum" id="7ENC"/>
<dbReference type="PDBsum" id="7ENJ"/>
<dbReference type="PDBsum" id="7LBM"/>
<dbReference type="PDBsum" id="7NVR"/>
<dbReference type="PDBsum" id="8GXQ"/>
<dbReference type="PDBsum" id="8GXS"/>
<dbReference type="PDBsum" id="8TQW"/>
<dbReference type="PDBsum" id="8TRH"/>
<dbReference type="EMDB" id="EMD-12610"/>
<dbReference type="EMDB" id="EMD-23255"/>
<dbReference type="EMDB" id="EMD-31191"/>
<dbReference type="EMDB" id="EMD-31204"/>
<dbReference type="EMDB" id="EMD-31207"/>
<dbReference type="EMDB" id="EMD-31211"/>
<dbReference type="EMDB" id="EMD-34359"/>
<dbReference type="EMDB" id="EMD-34360"/>
<dbReference type="EMDB" id="EMD-41565"/>
<dbReference type="EMDB" id="EMD-41580"/>
<dbReference type="SMR" id="A0JLT2"/>
<dbReference type="BioGRID" id="128553">
    <property type="interactions" value="102"/>
</dbReference>
<dbReference type="ComplexPortal" id="CPX-3227">
    <property type="entry name" value="Core mediator complex"/>
</dbReference>
<dbReference type="CORUM" id="A0JLT2"/>
<dbReference type="DIP" id="DIP-31467N"/>
<dbReference type="FunCoup" id="A0JLT2">
    <property type="interactions" value="2569"/>
</dbReference>
<dbReference type="IntAct" id="A0JLT2">
    <property type="interactions" value="163"/>
</dbReference>
<dbReference type="MINT" id="A0JLT2"/>
<dbReference type="STRING" id="9606.ENSP00000498791"/>
<dbReference type="GlyGen" id="A0JLT2">
    <property type="glycosylation" value="2 sites, 1 O-linked glycan (1 site)"/>
</dbReference>
<dbReference type="iPTMnet" id="A0JLT2"/>
<dbReference type="PhosphoSitePlus" id="A0JLT2"/>
<dbReference type="BioMuta" id="MED19"/>
<dbReference type="jPOST" id="A0JLT2"/>
<dbReference type="MassIVE" id="A0JLT2"/>
<dbReference type="PaxDb" id="9606-ENSP00000337340"/>
<dbReference type="PeptideAtlas" id="A0JLT2"/>
<dbReference type="ProteomicsDB" id="38">
    <molecule id="A0JLT2-1"/>
</dbReference>
<dbReference type="ProteomicsDB" id="39">
    <molecule id="A0JLT2-2"/>
</dbReference>
<dbReference type="Pumba" id="A0JLT2"/>
<dbReference type="TopDownProteomics" id="A0JLT2-2">
    <molecule id="A0JLT2-2"/>
</dbReference>
<dbReference type="Antibodypedia" id="43279">
    <property type="antibodies" value="161 antibodies from 21 providers"/>
</dbReference>
<dbReference type="DNASU" id="219541"/>
<dbReference type="Ensembl" id="ENST00000337672.9">
    <molecule id="A0JLT2-2"/>
    <property type="protein sequence ID" value="ENSP00000337340.4"/>
    <property type="gene ID" value="ENSG00000156603.20"/>
</dbReference>
<dbReference type="Ensembl" id="ENST00000645681.2">
    <molecule id="A0JLT2-2"/>
    <property type="protein sequence ID" value="ENSP00000493863.2"/>
    <property type="gene ID" value="ENSG00000156603.20"/>
</dbReference>
<dbReference type="GeneID" id="219541"/>
<dbReference type="KEGG" id="hsa:219541"/>
<dbReference type="UCSC" id="uc001nlb.4">
    <molecule id="A0JLT2-1"/>
    <property type="organism name" value="human"/>
</dbReference>
<dbReference type="AGR" id="HGNC:29600"/>
<dbReference type="CTD" id="219541"/>
<dbReference type="DisGeNET" id="219541"/>
<dbReference type="GeneCards" id="MED19"/>
<dbReference type="HGNC" id="HGNC:29600">
    <property type="gene designation" value="MED19"/>
</dbReference>
<dbReference type="HPA" id="ENSG00000156603">
    <property type="expression patterns" value="Low tissue specificity"/>
</dbReference>
<dbReference type="MIM" id="612385">
    <property type="type" value="gene"/>
</dbReference>
<dbReference type="neXtProt" id="NX_A0JLT2"/>
<dbReference type="OpenTargets" id="ENSG00000156603"/>
<dbReference type="PharmGKB" id="PA134926032"/>
<dbReference type="VEuPathDB" id="HostDB:ENSG00000156603"/>
<dbReference type="eggNOG" id="KOG4043">
    <property type="taxonomic scope" value="Eukaryota"/>
</dbReference>
<dbReference type="GeneTree" id="ENSGT00390000001774"/>
<dbReference type="InParanoid" id="A0JLT2"/>
<dbReference type="OrthoDB" id="10044050at2759"/>
<dbReference type="PAN-GO" id="A0JLT2">
    <property type="GO annotations" value="3 GO annotations based on evolutionary models"/>
</dbReference>
<dbReference type="PhylomeDB" id="A0JLT2"/>
<dbReference type="TreeFam" id="TF317417"/>
<dbReference type="PathwayCommons" id="A0JLT2"/>
<dbReference type="Reactome" id="R-HSA-1989781">
    <property type="pathway name" value="PPARA activates gene expression"/>
</dbReference>
<dbReference type="Reactome" id="R-HSA-381340">
    <property type="pathway name" value="Transcriptional regulation of white adipocyte differentiation"/>
</dbReference>
<dbReference type="Reactome" id="R-HSA-9833110">
    <property type="pathway name" value="RSV-host interactions"/>
</dbReference>
<dbReference type="SignaLink" id="A0JLT2"/>
<dbReference type="SIGNOR" id="A0JLT2"/>
<dbReference type="BioGRID-ORCS" id="219541">
    <property type="hits" value="390 hits in 1182 CRISPR screens"/>
</dbReference>
<dbReference type="ChiTaRS" id="MED19">
    <property type="organism name" value="human"/>
</dbReference>
<dbReference type="GenomeRNAi" id="219541"/>
<dbReference type="Pharos" id="A0JLT2">
    <property type="development level" value="Tbio"/>
</dbReference>
<dbReference type="PRO" id="PR:A0JLT2"/>
<dbReference type="Proteomes" id="UP000005640">
    <property type="component" value="Chromosome 11"/>
</dbReference>
<dbReference type="RNAct" id="A0JLT2">
    <property type="molecule type" value="protein"/>
</dbReference>
<dbReference type="Bgee" id="ENSG00000156603">
    <property type="expression patterns" value="Expressed in oocyte and 194 other cell types or tissues"/>
</dbReference>
<dbReference type="ExpressionAtlas" id="A0JLT2">
    <property type="expression patterns" value="baseline and differential"/>
</dbReference>
<dbReference type="GO" id="GO:0070847">
    <property type="term" value="C:core mediator complex"/>
    <property type="evidence" value="ECO:0000353"/>
    <property type="project" value="ComplexPortal"/>
</dbReference>
<dbReference type="GO" id="GO:0016592">
    <property type="term" value="C:mediator complex"/>
    <property type="evidence" value="ECO:0000318"/>
    <property type="project" value="GO_Central"/>
</dbReference>
<dbReference type="GO" id="GO:0005654">
    <property type="term" value="C:nucleoplasm"/>
    <property type="evidence" value="ECO:0000304"/>
    <property type="project" value="Reactome"/>
</dbReference>
<dbReference type="GO" id="GO:0005634">
    <property type="term" value="C:nucleus"/>
    <property type="evidence" value="ECO:0000314"/>
    <property type="project" value="ComplexPortal"/>
</dbReference>
<dbReference type="GO" id="GO:0003712">
    <property type="term" value="F:transcription coregulator activity"/>
    <property type="evidence" value="ECO:0007669"/>
    <property type="project" value="InterPro"/>
</dbReference>
<dbReference type="GO" id="GO:0045944">
    <property type="term" value="P:positive regulation of transcription by RNA polymerase II"/>
    <property type="evidence" value="ECO:0000318"/>
    <property type="project" value="GO_Central"/>
</dbReference>
<dbReference type="GO" id="GO:0032968">
    <property type="term" value="P:positive regulation of transcription elongation by RNA polymerase II"/>
    <property type="evidence" value="ECO:0000303"/>
    <property type="project" value="ComplexPortal"/>
</dbReference>
<dbReference type="GO" id="GO:0060261">
    <property type="term" value="P:positive regulation of transcription initiation by RNA polymerase II"/>
    <property type="evidence" value="ECO:0000303"/>
    <property type="project" value="ComplexPortal"/>
</dbReference>
<dbReference type="GO" id="GO:0051123">
    <property type="term" value="P:RNA polymerase II preinitiation complex assembly"/>
    <property type="evidence" value="ECO:0000303"/>
    <property type="project" value="ComplexPortal"/>
</dbReference>
<dbReference type="InterPro" id="IPR019403">
    <property type="entry name" value="Mediator_Med19_met"/>
</dbReference>
<dbReference type="PANTHER" id="PTHR22536">
    <property type="entry name" value="LUNG CANCER METASTASIS-RELATED LCMR1 PROTEIN"/>
    <property type="match status" value="1"/>
</dbReference>
<dbReference type="PANTHER" id="PTHR22536:SF1">
    <property type="entry name" value="MEDIATOR OF RNA POLYMERASE II TRANSCRIPTION SUBUNIT 19"/>
    <property type="match status" value="1"/>
</dbReference>
<dbReference type="Pfam" id="PF10278">
    <property type="entry name" value="Med19"/>
    <property type="match status" value="1"/>
</dbReference>
<reference key="1">
    <citation type="submission" date="2006-12" db="EMBL/GenBank/DDBJ databases">
        <authorList>
            <person name="Mural R.J."/>
            <person name="Istrail S."/>
            <person name="Sutton G.G."/>
            <person name="Florea L."/>
            <person name="Halpern A.L."/>
            <person name="Mobarry C.M."/>
            <person name="Lippert R."/>
            <person name="Walenz B."/>
            <person name="Shatkay H."/>
            <person name="Dew I."/>
            <person name="Miller J.R."/>
            <person name="Flanigan M.J."/>
            <person name="Edwards N.J."/>
            <person name="Bolanos R."/>
            <person name="Fasulo D."/>
            <person name="Halldorsson B.V."/>
            <person name="Hannenhalli S."/>
            <person name="Turner R."/>
            <person name="Yooseph S."/>
            <person name="Lu F."/>
            <person name="Nusskern D.R."/>
            <person name="Shue B.C."/>
            <person name="Zheng X.H."/>
            <person name="Zhong F."/>
            <person name="Delcher A.L."/>
            <person name="Huson D.H."/>
            <person name="Kravitz S.A."/>
            <person name="Mouchard L."/>
            <person name="Reinert K."/>
            <person name="Remington K.A."/>
            <person name="Clark A.G."/>
            <person name="Waterman M.S."/>
            <person name="Eichler E.E."/>
            <person name="Adams M.D."/>
            <person name="Hunkapiller M.W."/>
            <person name="Myers E.W."/>
            <person name="Venter J.C."/>
        </authorList>
    </citation>
    <scope>NUCLEOTIDE SEQUENCE [LARGE SCALE GENOMIC DNA]</scope>
</reference>
<reference key="2">
    <citation type="journal article" date="2004" name="Genome Res.">
        <title>The status, quality, and expansion of the NIH full-length cDNA project: the Mammalian Gene Collection (MGC).</title>
        <authorList>
            <consortium name="The MGC Project Team"/>
        </authorList>
    </citation>
    <scope>NUCLEOTIDE SEQUENCE [LARGE SCALE MRNA] (ISOFORM 2)</scope>
    <scope>NUCLEOTIDE SEQUENCE [LARGE SCALE MRNA] OF 1-205 (ISOFORM 1)</scope>
    <source>
        <tissue>Brain</tissue>
        <tissue>Lung</tissue>
    </source>
</reference>
<reference key="3">
    <citation type="submission" date="2002-09" db="EMBL/GenBank/DDBJ databases">
        <title>Cloning of a metastasis-related gene cDNA from a human lung cancer cell line.</title>
        <authorList>
            <person name="Chen L.A."/>
            <person name="Tian Q."/>
            <person name="Liu Y.N."/>
            <person name="Fan B.X."/>
        </authorList>
    </citation>
    <scope>NUCLEOTIDE SEQUENCE [MRNA] OF 48-244 (ISOFORM 1)</scope>
</reference>
<reference key="4">
    <citation type="journal article" date="2003" name="J. Biol. Chem.">
        <title>Identification of mammalian Mediator subunits with similarities to yeast Mediator subunits Srb5, Srb6, Med11, and Rox3.</title>
        <authorList>
            <person name="Sato S."/>
            <person name="Tomomori-Sato C."/>
            <person name="Banks C.A.S."/>
            <person name="Sorokina I."/>
            <person name="Parmely T.J."/>
            <person name="Kong S.E."/>
            <person name="Jin J."/>
            <person name="Cai Y."/>
            <person name="Lane W.S."/>
            <person name="Brower C.S."/>
            <person name="Conaway R.C."/>
            <person name="Conaway J.W."/>
        </authorList>
    </citation>
    <scope>INTERACTION WITH MED10 AND MED31</scope>
</reference>
<reference key="5">
    <citation type="journal article" date="2004" name="Mol. Cell">
        <title>A set of consensus mammalian mediator subunits identified by multidimensional protein identification technology.</title>
        <authorList>
            <person name="Sato S."/>
            <person name="Tomomori-Sato C."/>
            <person name="Parmely T.J."/>
            <person name="Florens L."/>
            <person name="Zybailov B."/>
            <person name="Swanson S.K."/>
            <person name="Banks C.A.S."/>
            <person name="Jin J."/>
            <person name="Cai Y."/>
            <person name="Washburn M.P."/>
            <person name="Conaway J.W."/>
            <person name="Conaway R.C."/>
        </authorList>
    </citation>
    <scope>IDENTIFICATION BY MASS SPECTROMETRY</scope>
    <scope>IDENTIFICATION IN THE MEDIATOR COMPLEX</scope>
</reference>
<reference key="6">
    <citation type="journal article" date="2006" name="Cell">
        <title>Global, in vivo, and site-specific phosphorylation dynamics in signaling networks.</title>
        <authorList>
            <person name="Olsen J.V."/>
            <person name="Blagoev B."/>
            <person name="Gnad F."/>
            <person name="Macek B."/>
            <person name="Kumar C."/>
            <person name="Mortensen P."/>
            <person name="Mann M."/>
        </authorList>
    </citation>
    <scope>IDENTIFICATION BY MASS SPECTROMETRY [LARGE SCALE ANALYSIS]</scope>
    <source>
        <tissue>Cervix carcinoma</tissue>
    </source>
</reference>
<reference key="7">
    <citation type="journal article" date="2008" name="Proc. Natl. Acad. Sci. U.S.A.">
        <title>A quantitative atlas of mitotic phosphorylation.</title>
        <authorList>
            <person name="Dephoure N."/>
            <person name="Zhou C."/>
            <person name="Villen J."/>
            <person name="Beausoleil S.A."/>
            <person name="Bakalarski C.E."/>
            <person name="Elledge S.J."/>
            <person name="Gygi S.P."/>
        </authorList>
    </citation>
    <scope>PHOSPHORYLATION [LARGE SCALE ANALYSIS] AT SER-226</scope>
    <scope>IDENTIFICATION BY MASS SPECTROMETRY [LARGE SCALE ANALYSIS]</scope>
    <source>
        <tissue>Cervix carcinoma</tissue>
    </source>
</reference>
<reference key="8">
    <citation type="journal article" date="2009" name="Anal. Chem.">
        <title>Lys-N and trypsin cover complementary parts of the phosphoproteome in a refined SCX-based approach.</title>
        <authorList>
            <person name="Gauci S."/>
            <person name="Helbig A.O."/>
            <person name="Slijper M."/>
            <person name="Krijgsveld J."/>
            <person name="Heck A.J."/>
            <person name="Mohammed S."/>
        </authorList>
    </citation>
    <scope>IDENTIFICATION BY MASS SPECTROMETRY [LARGE SCALE ANALYSIS]</scope>
</reference>
<reference key="9">
    <citation type="journal article" date="2009" name="Mol. Cell. Proteomics">
        <title>Large-scale proteomics analysis of the human kinome.</title>
        <authorList>
            <person name="Oppermann F.S."/>
            <person name="Gnad F."/>
            <person name="Olsen J.V."/>
            <person name="Hornberger R."/>
            <person name="Greff Z."/>
            <person name="Keri G."/>
            <person name="Mann M."/>
            <person name="Daub H."/>
        </authorList>
    </citation>
    <scope>IDENTIFICATION BY MASS SPECTROMETRY [LARGE SCALE ANALYSIS]</scope>
</reference>
<reference key="10">
    <citation type="journal article" date="2010" name="Sci. Signal.">
        <title>Quantitative phosphoproteomics reveals widespread full phosphorylation site occupancy during mitosis.</title>
        <authorList>
            <person name="Olsen J.V."/>
            <person name="Vermeulen M."/>
            <person name="Santamaria A."/>
            <person name="Kumar C."/>
            <person name="Miller M.L."/>
            <person name="Jensen L.J."/>
            <person name="Gnad F."/>
            <person name="Cox J."/>
            <person name="Jensen T.S."/>
            <person name="Nigg E.A."/>
            <person name="Brunak S."/>
            <person name="Mann M."/>
        </authorList>
    </citation>
    <scope>PHOSPHORYLATION [LARGE SCALE ANALYSIS] AT SER-226</scope>
    <scope>IDENTIFICATION BY MASS SPECTROMETRY [LARGE SCALE ANALYSIS]</scope>
    <source>
        <tissue>Cervix carcinoma</tissue>
    </source>
</reference>
<reference key="11">
    <citation type="journal article" date="2013" name="J. Proteome Res.">
        <title>Toward a comprehensive characterization of a human cancer cell phosphoproteome.</title>
        <authorList>
            <person name="Zhou H."/>
            <person name="Di Palma S."/>
            <person name="Preisinger C."/>
            <person name="Peng M."/>
            <person name="Polat A.N."/>
            <person name="Heck A.J."/>
            <person name="Mohammed S."/>
        </authorList>
    </citation>
    <scope>PHOSPHORYLATION [LARGE SCALE ANALYSIS] AT SER-194 AND SER-226</scope>
    <scope>IDENTIFICATION BY MASS SPECTROMETRY [LARGE SCALE ANALYSIS]</scope>
    <source>
        <tissue>Cervix carcinoma</tissue>
        <tissue>Erythroleukemia</tissue>
    </source>
</reference>
<name>MED19_HUMAN</name>
<organism>
    <name type="scientific">Homo sapiens</name>
    <name type="common">Human</name>
    <dbReference type="NCBI Taxonomy" id="9606"/>
    <lineage>
        <taxon>Eukaryota</taxon>
        <taxon>Metazoa</taxon>
        <taxon>Chordata</taxon>
        <taxon>Craniata</taxon>
        <taxon>Vertebrata</taxon>
        <taxon>Euteleostomi</taxon>
        <taxon>Mammalia</taxon>
        <taxon>Eutheria</taxon>
        <taxon>Euarchontoglires</taxon>
        <taxon>Primates</taxon>
        <taxon>Haplorrhini</taxon>
        <taxon>Catarrhini</taxon>
        <taxon>Hominidae</taxon>
        <taxon>Homo</taxon>
    </lineage>
</organism>